<keyword id="KW-1185">Reference proteome</keyword>
<reference key="1">
    <citation type="journal article" date="2001" name="Nature">
        <title>Genome sequence of Yersinia pestis, the causative agent of plague.</title>
        <authorList>
            <person name="Parkhill J."/>
            <person name="Wren B.W."/>
            <person name="Thomson N.R."/>
            <person name="Titball R.W."/>
            <person name="Holden M.T.G."/>
            <person name="Prentice M.B."/>
            <person name="Sebaihia M."/>
            <person name="James K.D."/>
            <person name="Churcher C.M."/>
            <person name="Mungall K.L."/>
            <person name="Baker S."/>
            <person name="Basham D."/>
            <person name="Bentley S.D."/>
            <person name="Brooks K."/>
            <person name="Cerdeno-Tarraga A.-M."/>
            <person name="Chillingworth T."/>
            <person name="Cronin A."/>
            <person name="Davies R.M."/>
            <person name="Davis P."/>
            <person name="Dougan G."/>
            <person name="Feltwell T."/>
            <person name="Hamlin N."/>
            <person name="Holroyd S."/>
            <person name="Jagels K."/>
            <person name="Karlyshev A.V."/>
            <person name="Leather S."/>
            <person name="Moule S."/>
            <person name="Oyston P.C.F."/>
            <person name="Quail M.A."/>
            <person name="Rutherford K.M."/>
            <person name="Simmonds M."/>
            <person name="Skelton J."/>
            <person name="Stevens K."/>
            <person name="Whitehead S."/>
            <person name="Barrell B.G."/>
        </authorList>
    </citation>
    <scope>NUCLEOTIDE SEQUENCE [LARGE SCALE GENOMIC DNA]</scope>
    <source>
        <strain>CO-92 / Biovar Orientalis</strain>
    </source>
</reference>
<reference key="2">
    <citation type="journal article" date="2002" name="J. Bacteriol.">
        <title>Genome sequence of Yersinia pestis KIM.</title>
        <authorList>
            <person name="Deng W."/>
            <person name="Burland V."/>
            <person name="Plunkett G. III"/>
            <person name="Boutin A."/>
            <person name="Mayhew G.F."/>
            <person name="Liss P."/>
            <person name="Perna N.T."/>
            <person name="Rose D.J."/>
            <person name="Mau B."/>
            <person name="Zhou S."/>
            <person name="Schwartz D.C."/>
            <person name="Fetherston J.D."/>
            <person name="Lindler L.E."/>
            <person name="Brubaker R.R."/>
            <person name="Plano G.V."/>
            <person name="Straley S.C."/>
            <person name="McDonough K.A."/>
            <person name="Nilles M.L."/>
            <person name="Matson J.S."/>
            <person name="Blattner F.R."/>
            <person name="Perry R.D."/>
        </authorList>
    </citation>
    <scope>NUCLEOTIDE SEQUENCE [LARGE SCALE GENOMIC DNA]</scope>
    <source>
        <strain>KIM10+ / Biovar Mediaevalis</strain>
    </source>
</reference>
<reference key="3">
    <citation type="journal article" date="2004" name="DNA Res.">
        <title>Complete genome sequence of Yersinia pestis strain 91001, an isolate avirulent to humans.</title>
        <authorList>
            <person name="Song Y."/>
            <person name="Tong Z."/>
            <person name="Wang J."/>
            <person name="Wang L."/>
            <person name="Guo Z."/>
            <person name="Han Y."/>
            <person name="Zhang J."/>
            <person name="Pei D."/>
            <person name="Zhou D."/>
            <person name="Qin H."/>
            <person name="Pang X."/>
            <person name="Han Y."/>
            <person name="Zhai J."/>
            <person name="Li M."/>
            <person name="Cui B."/>
            <person name="Qi Z."/>
            <person name="Jin L."/>
            <person name="Dai R."/>
            <person name="Chen F."/>
            <person name="Li S."/>
            <person name="Ye C."/>
            <person name="Du Z."/>
            <person name="Lin W."/>
            <person name="Wang J."/>
            <person name="Yu J."/>
            <person name="Yang H."/>
            <person name="Wang J."/>
            <person name="Huang P."/>
            <person name="Yang R."/>
        </authorList>
    </citation>
    <scope>NUCLEOTIDE SEQUENCE [LARGE SCALE GENOMIC DNA]</scope>
    <source>
        <strain>91001 / Biovar Mediaevalis</strain>
    </source>
</reference>
<sequence length="187" mass="20609">MNLQHHFLIAMPSLQDPQFKRSVIYICEHGEKGAMGLVINKPLEQLTVETILEKLKIKSPSRDPAIRLDNVVLAGGPLAEDRGFILHSPQEGFASSIHISPETMITTSKDVLETLGTSGQPKNLLVALGYASWRQGQLEQELLDNVWLTTEADTHILFNTPIAERWQAAANKLGINIFNIAPQAGHA</sequence>
<name>Y936_YERPE</name>
<comment type="similarity">
    <text evidence="1">Belongs to the UPF0301 (AlgH) family.</text>
</comment>
<comment type="sequence caution" evidence="2">
    <conflict type="erroneous initiation">
        <sequence resource="EMBL-CDS" id="AAM86872"/>
    </conflict>
</comment>
<comment type="sequence caution" evidence="2">
    <conflict type="erroneous initiation">
        <sequence resource="EMBL-CDS" id="AAS63660"/>
    </conflict>
</comment>
<evidence type="ECO:0000255" key="1">
    <source>
        <dbReference type="HAMAP-Rule" id="MF_00758"/>
    </source>
</evidence>
<evidence type="ECO:0000305" key="2"/>
<gene>
    <name type="ordered locus">YPO0936</name>
    <name type="ordered locus">y3322</name>
    <name type="ordered locus">YP_3506</name>
</gene>
<organism>
    <name type="scientific">Yersinia pestis</name>
    <dbReference type="NCBI Taxonomy" id="632"/>
    <lineage>
        <taxon>Bacteria</taxon>
        <taxon>Pseudomonadati</taxon>
        <taxon>Pseudomonadota</taxon>
        <taxon>Gammaproteobacteria</taxon>
        <taxon>Enterobacterales</taxon>
        <taxon>Yersiniaceae</taxon>
        <taxon>Yersinia</taxon>
    </lineage>
</organism>
<dbReference type="EMBL" id="AL590842">
    <property type="protein sequence ID" value="CAL19602.1"/>
    <property type="molecule type" value="Genomic_DNA"/>
</dbReference>
<dbReference type="EMBL" id="AE009952">
    <property type="protein sequence ID" value="AAM86872.1"/>
    <property type="status" value="ALT_INIT"/>
    <property type="molecule type" value="Genomic_DNA"/>
</dbReference>
<dbReference type="EMBL" id="AE017042">
    <property type="protein sequence ID" value="AAS63660.1"/>
    <property type="status" value="ALT_INIT"/>
    <property type="molecule type" value="Genomic_DNA"/>
</dbReference>
<dbReference type="PIR" id="AH0114">
    <property type="entry name" value="AH0114"/>
</dbReference>
<dbReference type="RefSeq" id="WP_002209977.1">
    <property type="nucleotide sequence ID" value="NZ_WUCM01000030.1"/>
</dbReference>
<dbReference type="RefSeq" id="YP_002345983.1">
    <property type="nucleotide sequence ID" value="NC_003143.1"/>
</dbReference>
<dbReference type="SMR" id="Q8ZHG3"/>
<dbReference type="IntAct" id="Q8ZHG3">
    <property type="interactions" value="3"/>
</dbReference>
<dbReference type="STRING" id="214092.YPO0936"/>
<dbReference type="PaxDb" id="214092-YPO0936"/>
<dbReference type="EnsemblBacteria" id="AAS63660">
    <property type="protein sequence ID" value="AAS63660"/>
    <property type="gene ID" value="YP_3506"/>
</dbReference>
<dbReference type="KEGG" id="ype:YPO0936"/>
<dbReference type="KEGG" id="ypk:y3322"/>
<dbReference type="KEGG" id="ypm:YP_3506"/>
<dbReference type="PATRIC" id="fig|214092.21.peg.1214"/>
<dbReference type="eggNOG" id="COG1678">
    <property type="taxonomic scope" value="Bacteria"/>
</dbReference>
<dbReference type="HOGENOM" id="CLU_057596_1_0_6"/>
<dbReference type="OMA" id="GAWYVVE"/>
<dbReference type="OrthoDB" id="9807486at2"/>
<dbReference type="Proteomes" id="UP000000815">
    <property type="component" value="Chromosome"/>
</dbReference>
<dbReference type="Proteomes" id="UP000001019">
    <property type="component" value="Chromosome"/>
</dbReference>
<dbReference type="Proteomes" id="UP000002490">
    <property type="component" value="Chromosome"/>
</dbReference>
<dbReference type="GO" id="GO:0005829">
    <property type="term" value="C:cytosol"/>
    <property type="evidence" value="ECO:0000318"/>
    <property type="project" value="GO_Central"/>
</dbReference>
<dbReference type="Gene3D" id="3.40.1740.10">
    <property type="entry name" value="VC0467-like"/>
    <property type="match status" value="1"/>
</dbReference>
<dbReference type="Gene3D" id="3.30.70.1300">
    <property type="entry name" value="VC0467-like domains"/>
    <property type="match status" value="1"/>
</dbReference>
<dbReference type="HAMAP" id="MF_00758">
    <property type="entry name" value="UPF0301"/>
    <property type="match status" value="1"/>
</dbReference>
<dbReference type="InterPro" id="IPR003774">
    <property type="entry name" value="AlgH-like"/>
</dbReference>
<dbReference type="NCBIfam" id="NF001266">
    <property type="entry name" value="PRK00228.1-1"/>
    <property type="match status" value="1"/>
</dbReference>
<dbReference type="PANTHER" id="PTHR30327">
    <property type="entry name" value="UNCHARACTERIZED PROTEIN YQGE"/>
    <property type="match status" value="1"/>
</dbReference>
<dbReference type="PANTHER" id="PTHR30327:SF1">
    <property type="entry name" value="UPF0301 PROTEIN YQGE"/>
    <property type="match status" value="1"/>
</dbReference>
<dbReference type="Pfam" id="PF02622">
    <property type="entry name" value="DUF179"/>
    <property type="match status" value="1"/>
</dbReference>
<dbReference type="SUPFAM" id="SSF143456">
    <property type="entry name" value="VC0467-like"/>
    <property type="match status" value="1"/>
</dbReference>
<feature type="chain" id="PRO_0000214359" description="UPF0301 protein YPO0936/y3322/YP_3506">
    <location>
        <begin position="1"/>
        <end position="187"/>
    </location>
</feature>
<proteinExistence type="inferred from homology"/>
<accession>Q8ZHG3</accession>
<accession>Q0WIA5</accession>
<accession>Q8CZV6</accession>
<protein>
    <recommendedName>
        <fullName evidence="1">UPF0301 protein YPO0936/y3322/YP_3506</fullName>
    </recommendedName>
</protein>